<name>COQ7_BURPS</name>
<protein>
    <recommendedName>
        <fullName evidence="1">3-demethoxyubiquinol 3-hydroxylase</fullName>
        <shortName evidence="1">DMQ hydroxylase</shortName>
        <ecNumber evidence="1">1.14.99.60</ecNumber>
    </recommendedName>
    <alternativeName>
        <fullName evidence="1">2-nonaprenyl-3-methyl-6-methoxy-1,4-benzoquinol hydroxylase</fullName>
    </alternativeName>
</protein>
<gene>
    <name evidence="1" type="primary">coq7</name>
    <name type="ordered locus">BPSL3035</name>
</gene>
<sequence>MVFDELITEFDRGLRSIAGVSRMSRPVPKPAAAAPAELSAAERKHAAGLMRVNHVGEVCAQALYQAQKLTTSSAGLKEMFEHAAREEEDHLAWTAHRLKDLDSRPSLLNPLWYAGALAIGVVAGRLGDKMSLGFMAETERQVESHLDGHLSELPAADVESRAIVEQMRADEVKHGKSATDAGGIELPMPARMLMRAASKVMTSTAYYL</sequence>
<dbReference type="EC" id="1.14.99.60" evidence="1"/>
<dbReference type="EMBL" id="BX571965">
    <property type="protein sequence ID" value="CAH37047.1"/>
    <property type="molecule type" value="Genomic_DNA"/>
</dbReference>
<dbReference type="RefSeq" id="WP_004527787.1">
    <property type="nucleotide sequence ID" value="NZ_CP009538.1"/>
</dbReference>
<dbReference type="RefSeq" id="YP_109631.1">
    <property type="nucleotide sequence ID" value="NC_006350.1"/>
</dbReference>
<dbReference type="SMR" id="Q63QI7"/>
<dbReference type="STRING" id="272560.BPSL3035"/>
<dbReference type="KEGG" id="bps:BPSL3035"/>
<dbReference type="PATRIC" id="fig|272560.51.peg.2231"/>
<dbReference type="eggNOG" id="COG2941">
    <property type="taxonomic scope" value="Bacteria"/>
</dbReference>
<dbReference type="UniPathway" id="UPA00232"/>
<dbReference type="Proteomes" id="UP000000605">
    <property type="component" value="Chromosome 1"/>
</dbReference>
<dbReference type="GO" id="GO:0005886">
    <property type="term" value="C:plasma membrane"/>
    <property type="evidence" value="ECO:0007669"/>
    <property type="project" value="UniProtKB-SubCell"/>
</dbReference>
<dbReference type="GO" id="GO:0008682">
    <property type="term" value="F:3-demethoxyubiquinol 3-hydroxylase activity"/>
    <property type="evidence" value="ECO:0007669"/>
    <property type="project" value="UniProtKB-EC"/>
</dbReference>
<dbReference type="GO" id="GO:0046872">
    <property type="term" value="F:metal ion binding"/>
    <property type="evidence" value="ECO:0007669"/>
    <property type="project" value="UniProtKB-KW"/>
</dbReference>
<dbReference type="GO" id="GO:0006744">
    <property type="term" value="P:ubiquinone biosynthetic process"/>
    <property type="evidence" value="ECO:0007669"/>
    <property type="project" value="UniProtKB-UniRule"/>
</dbReference>
<dbReference type="CDD" id="cd01042">
    <property type="entry name" value="DMQH"/>
    <property type="match status" value="1"/>
</dbReference>
<dbReference type="Gene3D" id="1.20.1260.10">
    <property type="match status" value="1"/>
</dbReference>
<dbReference type="HAMAP" id="MF_01658">
    <property type="entry name" value="COQ7"/>
    <property type="match status" value="1"/>
</dbReference>
<dbReference type="InterPro" id="IPR047809">
    <property type="entry name" value="COQ7_proteobact"/>
</dbReference>
<dbReference type="InterPro" id="IPR012347">
    <property type="entry name" value="Ferritin-like"/>
</dbReference>
<dbReference type="InterPro" id="IPR009078">
    <property type="entry name" value="Ferritin-like_SF"/>
</dbReference>
<dbReference type="InterPro" id="IPR011566">
    <property type="entry name" value="Ubq_synth_Coq7"/>
</dbReference>
<dbReference type="NCBIfam" id="NF033656">
    <property type="entry name" value="DMQ_monoox_COQ7"/>
    <property type="match status" value="1"/>
</dbReference>
<dbReference type="PANTHER" id="PTHR11237:SF4">
    <property type="entry name" value="5-DEMETHOXYUBIQUINONE HYDROXYLASE, MITOCHONDRIAL"/>
    <property type="match status" value="1"/>
</dbReference>
<dbReference type="PANTHER" id="PTHR11237">
    <property type="entry name" value="COENZYME Q10 BIOSYNTHESIS PROTEIN 7"/>
    <property type="match status" value="1"/>
</dbReference>
<dbReference type="Pfam" id="PF03232">
    <property type="entry name" value="COQ7"/>
    <property type="match status" value="1"/>
</dbReference>
<dbReference type="SUPFAM" id="SSF47240">
    <property type="entry name" value="Ferritin-like"/>
    <property type="match status" value="1"/>
</dbReference>
<feature type="chain" id="PRO_0000338670" description="3-demethoxyubiquinol 3-hydroxylase">
    <location>
        <begin position="1"/>
        <end position="208"/>
    </location>
</feature>
<feature type="binding site" evidence="1">
    <location>
        <position position="57"/>
    </location>
    <ligand>
        <name>Fe cation</name>
        <dbReference type="ChEBI" id="CHEBI:24875"/>
        <label>1</label>
    </ligand>
</feature>
<feature type="binding site" evidence="1">
    <location>
        <position position="87"/>
    </location>
    <ligand>
        <name>Fe cation</name>
        <dbReference type="ChEBI" id="CHEBI:24875"/>
        <label>1</label>
    </ligand>
</feature>
<feature type="binding site" evidence="1">
    <location>
        <position position="87"/>
    </location>
    <ligand>
        <name>Fe cation</name>
        <dbReference type="ChEBI" id="CHEBI:24875"/>
        <label>2</label>
    </ligand>
</feature>
<feature type="binding site" evidence="1">
    <location>
        <position position="90"/>
    </location>
    <ligand>
        <name>Fe cation</name>
        <dbReference type="ChEBI" id="CHEBI:24875"/>
        <label>1</label>
    </ligand>
</feature>
<feature type="binding site" evidence="1">
    <location>
        <position position="139"/>
    </location>
    <ligand>
        <name>Fe cation</name>
        <dbReference type="ChEBI" id="CHEBI:24875"/>
        <label>2</label>
    </ligand>
</feature>
<feature type="binding site" evidence="1">
    <location>
        <position position="171"/>
    </location>
    <ligand>
        <name>Fe cation</name>
        <dbReference type="ChEBI" id="CHEBI:24875"/>
        <label>1</label>
    </ligand>
</feature>
<feature type="binding site" evidence="1">
    <location>
        <position position="171"/>
    </location>
    <ligand>
        <name>Fe cation</name>
        <dbReference type="ChEBI" id="CHEBI:24875"/>
        <label>2</label>
    </ligand>
</feature>
<feature type="binding site" evidence="1">
    <location>
        <position position="174"/>
    </location>
    <ligand>
        <name>Fe cation</name>
        <dbReference type="ChEBI" id="CHEBI:24875"/>
        <label>2</label>
    </ligand>
</feature>
<reference key="1">
    <citation type="journal article" date="2004" name="Proc. Natl. Acad. Sci. U.S.A.">
        <title>Genomic plasticity of the causative agent of melioidosis, Burkholderia pseudomallei.</title>
        <authorList>
            <person name="Holden M.T.G."/>
            <person name="Titball R.W."/>
            <person name="Peacock S.J."/>
            <person name="Cerdeno-Tarraga A.-M."/>
            <person name="Atkins T."/>
            <person name="Crossman L.C."/>
            <person name="Pitt T."/>
            <person name="Churcher C."/>
            <person name="Mungall K.L."/>
            <person name="Bentley S.D."/>
            <person name="Sebaihia M."/>
            <person name="Thomson N.R."/>
            <person name="Bason N."/>
            <person name="Beacham I.R."/>
            <person name="Brooks K."/>
            <person name="Brown K.A."/>
            <person name="Brown N.F."/>
            <person name="Challis G.L."/>
            <person name="Cherevach I."/>
            <person name="Chillingworth T."/>
            <person name="Cronin A."/>
            <person name="Crossett B."/>
            <person name="Davis P."/>
            <person name="DeShazer D."/>
            <person name="Feltwell T."/>
            <person name="Fraser A."/>
            <person name="Hance Z."/>
            <person name="Hauser H."/>
            <person name="Holroyd S."/>
            <person name="Jagels K."/>
            <person name="Keith K.E."/>
            <person name="Maddison M."/>
            <person name="Moule S."/>
            <person name="Price C."/>
            <person name="Quail M.A."/>
            <person name="Rabbinowitsch E."/>
            <person name="Rutherford K."/>
            <person name="Sanders M."/>
            <person name="Simmonds M."/>
            <person name="Songsivilai S."/>
            <person name="Stevens K."/>
            <person name="Tumapa S."/>
            <person name="Vesaratchavest M."/>
            <person name="Whitehead S."/>
            <person name="Yeats C."/>
            <person name="Barrell B.G."/>
            <person name="Oyston P.C.F."/>
            <person name="Parkhill J."/>
        </authorList>
    </citation>
    <scope>NUCLEOTIDE SEQUENCE [LARGE SCALE GENOMIC DNA]</scope>
    <source>
        <strain>K96243</strain>
    </source>
</reference>
<keyword id="KW-1003">Cell membrane</keyword>
<keyword id="KW-0408">Iron</keyword>
<keyword id="KW-0472">Membrane</keyword>
<keyword id="KW-0479">Metal-binding</keyword>
<keyword id="KW-0503">Monooxygenase</keyword>
<keyword id="KW-0560">Oxidoreductase</keyword>
<keyword id="KW-1185">Reference proteome</keyword>
<keyword id="KW-0831">Ubiquinone biosynthesis</keyword>
<proteinExistence type="inferred from homology"/>
<organism>
    <name type="scientific">Burkholderia pseudomallei (strain K96243)</name>
    <dbReference type="NCBI Taxonomy" id="272560"/>
    <lineage>
        <taxon>Bacteria</taxon>
        <taxon>Pseudomonadati</taxon>
        <taxon>Pseudomonadota</taxon>
        <taxon>Betaproteobacteria</taxon>
        <taxon>Burkholderiales</taxon>
        <taxon>Burkholderiaceae</taxon>
        <taxon>Burkholderia</taxon>
        <taxon>pseudomallei group</taxon>
    </lineage>
</organism>
<accession>Q63QI7</accession>
<evidence type="ECO:0000255" key="1">
    <source>
        <dbReference type="HAMAP-Rule" id="MF_01658"/>
    </source>
</evidence>
<comment type="function">
    <text evidence="1">Catalyzes the hydroxylation of 2-nonaprenyl-3-methyl-6-methoxy-1,4-benzoquinol during ubiquinone biosynthesis.</text>
</comment>
<comment type="catalytic activity">
    <reaction evidence="1">
        <text>a 5-methoxy-2-methyl-3-(all-trans-polyprenyl)benzene-1,4-diol + AH2 + O2 = a 3-demethylubiquinol + A + H2O</text>
        <dbReference type="Rhea" id="RHEA:50908"/>
        <dbReference type="Rhea" id="RHEA-COMP:10859"/>
        <dbReference type="Rhea" id="RHEA-COMP:10914"/>
        <dbReference type="ChEBI" id="CHEBI:13193"/>
        <dbReference type="ChEBI" id="CHEBI:15377"/>
        <dbReference type="ChEBI" id="CHEBI:15379"/>
        <dbReference type="ChEBI" id="CHEBI:17499"/>
        <dbReference type="ChEBI" id="CHEBI:84167"/>
        <dbReference type="ChEBI" id="CHEBI:84422"/>
        <dbReference type="EC" id="1.14.99.60"/>
    </reaction>
</comment>
<comment type="cofactor">
    <cofactor evidence="1">
        <name>Fe cation</name>
        <dbReference type="ChEBI" id="CHEBI:24875"/>
    </cofactor>
    <text evidence="1">Binds 2 iron ions per subunit.</text>
</comment>
<comment type="pathway">
    <text evidence="1">Cofactor biosynthesis; ubiquinone biosynthesis.</text>
</comment>
<comment type="subcellular location">
    <subcellularLocation>
        <location evidence="1">Cell membrane</location>
        <topology evidence="1">Peripheral membrane protein</topology>
    </subcellularLocation>
</comment>
<comment type="similarity">
    <text evidence="1">Belongs to the COQ7 family.</text>
</comment>